<accession>Q07W23</accession>
<evidence type="ECO:0000255" key="1">
    <source>
        <dbReference type="HAMAP-Rule" id="MF_01681"/>
    </source>
</evidence>
<feature type="chain" id="PRO_0000357401" description="Enolase-phosphatase E1">
    <location>
        <begin position="1"/>
        <end position="226"/>
    </location>
</feature>
<protein>
    <recommendedName>
        <fullName evidence="1">Enolase-phosphatase E1</fullName>
        <ecNumber evidence="1">3.1.3.77</ecNumber>
    </recommendedName>
    <alternativeName>
        <fullName evidence="1">2,3-diketo-5-methylthio-1-phosphopentane phosphatase</fullName>
    </alternativeName>
</protein>
<name>MTNC_SHEFN</name>
<comment type="function">
    <text evidence="1">Bifunctional enzyme that catalyzes the enolization of 2,3-diketo-5-methylthiopentyl-1-phosphate (DK-MTP-1-P) into the intermediate 2-hydroxy-3-keto-5-methylthiopentenyl-1-phosphate (HK-MTPenyl-1-P), which is then dephosphorylated to form the acireductone 1,2-dihydroxy-3-keto-5-methylthiopentene (DHK-MTPene).</text>
</comment>
<comment type="catalytic activity">
    <reaction evidence="1">
        <text>5-methylsulfanyl-2,3-dioxopentyl phosphate + H2O = 1,2-dihydroxy-5-(methylsulfanyl)pent-1-en-3-one + phosphate</text>
        <dbReference type="Rhea" id="RHEA:21700"/>
        <dbReference type="ChEBI" id="CHEBI:15377"/>
        <dbReference type="ChEBI" id="CHEBI:43474"/>
        <dbReference type="ChEBI" id="CHEBI:49252"/>
        <dbReference type="ChEBI" id="CHEBI:58828"/>
        <dbReference type="EC" id="3.1.3.77"/>
    </reaction>
</comment>
<comment type="cofactor">
    <cofactor evidence="1">
        <name>Mg(2+)</name>
        <dbReference type="ChEBI" id="CHEBI:18420"/>
    </cofactor>
    <text evidence="1">Binds 1 Mg(2+) ion per subunit.</text>
</comment>
<comment type="pathway">
    <text evidence="1">Amino-acid biosynthesis; L-methionine biosynthesis via salvage pathway; L-methionine from S-methyl-5-thio-alpha-D-ribose 1-phosphate: step 3/6.</text>
</comment>
<comment type="pathway">
    <text evidence="1">Amino-acid biosynthesis; L-methionine biosynthesis via salvage pathway; L-methionine from S-methyl-5-thio-alpha-D-ribose 1-phosphate: step 4/6.</text>
</comment>
<comment type="subunit">
    <text evidence="1">Monomer.</text>
</comment>
<comment type="similarity">
    <text evidence="1">Belongs to the HAD-like hydrolase superfamily. MasA/MtnC family.</text>
</comment>
<reference key="1">
    <citation type="submission" date="2006-08" db="EMBL/GenBank/DDBJ databases">
        <title>Complete sequence of Shewanella frigidimarina NCIMB 400.</title>
        <authorList>
            <consortium name="US DOE Joint Genome Institute"/>
            <person name="Copeland A."/>
            <person name="Lucas S."/>
            <person name="Lapidus A."/>
            <person name="Barry K."/>
            <person name="Detter J.C."/>
            <person name="Glavina del Rio T."/>
            <person name="Hammon N."/>
            <person name="Israni S."/>
            <person name="Dalin E."/>
            <person name="Tice H."/>
            <person name="Pitluck S."/>
            <person name="Fredrickson J.K."/>
            <person name="Kolker E."/>
            <person name="McCuel L.A."/>
            <person name="DiChristina T."/>
            <person name="Nealson K.H."/>
            <person name="Newman D."/>
            <person name="Tiedje J.M."/>
            <person name="Zhou J."/>
            <person name="Romine M.F."/>
            <person name="Culley D.E."/>
            <person name="Serres M."/>
            <person name="Chertkov O."/>
            <person name="Brettin T."/>
            <person name="Bruce D."/>
            <person name="Han C."/>
            <person name="Tapia R."/>
            <person name="Gilna P."/>
            <person name="Schmutz J."/>
            <person name="Larimer F."/>
            <person name="Land M."/>
            <person name="Hauser L."/>
            <person name="Kyrpides N."/>
            <person name="Mikhailova N."/>
            <person name="Richardson P."/>
        </authorList>
    </citation>
    <scope>NUCLEOTIDE SEQUENCE [LARGE SCALE GENOMIC DNA]</scope>
    <source>
        <strain>NCIMB 400</strain>
    </source>
</reference>
<keyword id="KW-0028">Amino-acid biosynthesis</keyword>
<keyword id="KW-0378">Hydrolase</keyword>
<keyword id="KW-0460">Magnesium</keyword>
<keyword id="KW-0479">Metal-binding</keyword>
<keyword id="KW-0486">Methionine biosynthesis</keyword>
<keyword id="KW-1185">Reference proteome</keyword>
<gene>
    <name evidence="1" type="primary">mtnC</name>
    <name type="ordered locus">Sfri_3966</name>
</gene>
<organism>
    <name type="scientific">Shewanella frigidimarina (strain NCIMB 400)</name>
    <dbReference type="NCBI Taxonomy" id="318167"/>
    <lineage>
        <taxon>Bacteria</taxon>
        <taxon>Pseudomonadati</taxon>
        <taxon>Pseudomonadota</taxon>
        <taxon>Gammaproteobacteria</taxon>
        <taxon>Alteromonadales</taxon>
        <taxon>Shewanellaceae</taxon>
        <taxon>Shewanella</taxon>
    </lineage>
</organism>
<proteinExistence type="inferred from homology"/>
<dbReference type="EC" id="3.1.3.77" evidence="1"/>
<dbReference type="EMBL" id="CP000447">
    <property type="protein sequence ID" value="ABI73791.1"/>
    <property type="molecule type" value="Genomic_DNA"/>
</dbReference>
<dbReference type="RefSeq" id="WP_011639373.1">
    <property type="nucleotide sequence ID" value="NC_008345.1"/>
</dbReference>
<dbReference type="SMR" id="Q07W23"/>
<dbReference type="STRING" id="318167.Sfri_3966"/>
<dbReference type="KEGG" id="sfr:Sfri_3966"/>
<dbReference type="eggNOG" id="COG4229">
    <property type="taxonomic scope" value="Bacteria"/>
</dbReference>
<dbReference type="HOGENOM" id="CLU_023273_0_0_6"/>
<dbReference type="OrthoDB" id="9797416at2"/>
<dbReference type="UniPathway" id="UPA00904">
    <property type="reaction ID" value="UER00876"/>
</dbReference>
<dbReference type="UniPathway" id="UPA00904">
    <property type="reaction ID" value="UER00877"/>
</dbReference>
<dbReference type="Proteomes" id="UP000000684">
    <property type="component" value="Chromosome"/>
</dbReference>
<dbReference type="GO" id="GO:0043715">
    <property type="term" value="F:2,3-diketo-5-methylthiopentyl-1-phosphate enolase activity"/>
    <property type="evidence" value="ECO:0007669"/>
    <property type="project" value="UniProtKB-UniRule"/>
</dbReference>
<dbReference type="GO" id="GO:0043716">
    <property type="term" value="F:2-hydroxy-3-keto-5-methylthiopentenyl-1-phosphate phosphatase activity"/>
    <property type="evidence" value="ECO:0007669"/>
    <property type="project" value="UniProtKB-UniRule"/>
</dbReference>
<dbReference type="GO" id="GO:0043874">
    <property type="term" value="F:acireductone synthase activity"/>
    <property type="evidence" value="ECO:0007669"/>
    <property type="project" value="UniProtKB-EC"/>
</dbReference>
<dbReference type="GO" id="GO:0000287">
    <property type="term" value="F:magnesium ion binding"/>
    <property type="evidence" value="ECO:0007669"/>
    <property type="project" value="UniProtKB-UniRule"/>
</dbReference>
<dbReference type="GO" id="GO:0019509">
    <property type="term" value="P:L-methionine salvage from methylthioadenosine"/>
    <property type="evidence" value="ECO:0007669"/>
    <property type="project" value="UniProtKB-UniRule"/>
</dbReference>
<dbReference type="CDD" id="cd01629">
    <property type="entry name" value="HAD_EP"/>
    <property type="match status" value="1"/>
</dbReference>
<dbReference type="FunFam" id="1.10.720.60:FF:000008">
    <property type="entry name" value="Enolase-phosphatase E1"/>
    <property type="match status" value="1"/>
</dbReference>
<dbReference type="Gene3D" id="1.10.720.60">
    <property type="match status" value="1"/>
</dbReference>
<dbReference type="Gene3D" id="3.40.50.1000">
    <property type="entry name" value="HAD superfamily/HAD-like"/>
    <property type="match status" value="1"/>
</dbReference>
<dbReference type="HAMAP" id="MF_01681">
    <property type="entry name" value="Salvage_MtnC"/>
    <property type="match status" value="1"/>
</dbReference>
<dbReference type="InterPro" id="IPR023943">
    <property type="entry name" value="Enolase-ppase_E1"/>
</dbReference>
<dbReference type="InterPro" id="IPR036412">
    <property type="entry name" value="HAD-like_sf"/>
</dbReference>
<dbReference type="InterPro" id="IPR006439">
    <property type="entry name" value="HAD-SF_hydro_IA"/>
</dbReference>
<dbReference type="InterPro" id="IPR023214">
    <property type="entry name" value="HAD_sf"/>
</dbReference>
<dbReference type="NCBIfam" id="TIGR01691">
    <property type="entry name" value="enolase-ppase"/>
    <property type="match status" value="1"/>
</dbReference>
<dbReference type="NCBIfam" id="TIGR01549">
    <property type="entry name" value="HAD-SF-IA-v1"/>
    <property type="match status" value="1"/>
</dbReference>
<dbReference type="PANTHER" id="PTHR20371">
    <property type="entry name" value="ENOLASE-PHOSPHATASE E1"/>
    <property type="match status" value="1"/>
</dbReference>
<dbReference type="PANTHER" id="PTHR20371:SF1">
    <property type="entry name" value="ENOLASE-PHOSPHATASE E1"/>
    <property type="match status" value="1"/>
</dbReference>
<dbReference type="Pfam" id="PF00702">
    <property type="entry name" value="Hydrolase"/>
    <property type="match status" value="1"/>
</dbReference>
<dbReference type="PRINTS" id="PR00413">
    <property type="entry name" value="HADHALOGNASE"/>
</dbReference>
<dbReference type="SFLD" id="SFLDF00044">
    <property type="entry name" value="enolase-phosphatase"/>
    <property type="match status" value="1"/>
</dbReference>
<dbReference type="SFLD" id="SFLDS00003">
    <property type="entry name" value="Haloacid_Dehalogenase"/>
    <property type="match status" value="1"/>
</dbReference>
<dbReference type="SUPFAM" id="SSF56784">
    <property type="entry name" value="HAD-like"/>
    <property type="match status" value="1"/>
</dbReference>
<sequence length="226" mass="25620">MSIRAIIVDTAGTTTDLNFIQDVLFPYSRKAMAEFLEQNQHNVVVDYCISDVKDIALEPDATLERVTEILQQWIDEDRKLTPLKTLQGLIWKQGYNRVEFTGHIYPDFIDSIERIKEKGIRIYSFSSGSVEAQKLLFSHTEAGDLTGSFNGHFDTRTGNKLDKQAYCNICNTISLKPKQILFVSDVAEELKAAEAAGMTTCQMIRFADQRQAKCKKISSFSELVFD</sequence>